<evidence type="ECO:0000255" key="1">
    <source>
        <dbReference type="HAMAP-Rule" id="MF_00007"/>
    </source>
</evidence>
<organism>
    <name type="scientific">Saccharolobus islandicus (strain M.16.4 / Kamchatka #3)</name>
    <name type="common">Sulfolobus islandicus</name>
    <dbReference type="NCBI Taxonomy" id="426118"/>
    <lineage>
        <taxon>Archaea</taxon>
        <taxon>Thermoproteota</taxon>
        <taxon>Thermoprotei</taxon>
        <taxon>Sulfolobales</taxon>
        <taxon>Sulfolobaceae</taxon>
        <taxon>Saccharolobus</taxon>
    </lineage>
</organism>
<sequence>MKYDIKLRFEVEGIVEKTDVIGAIFGQTENLFGDEFDLRELQDKGRLGRIIVEIRTKGGKSEGEIIIPSNLDRIETALIAAMVESVDKVGPYNSKFELIEIEDIRAEKLKKIIERAKGILSSWSKEKSLDIKEVINEISSAVKVGEITEYGPERLPAGPDVDKDPNLIIVEGRADVINLLRYGYKNVIAVEGATSRIPETVVSLSKMKKTVIAFLDGDHGGDLILKELLSNNVKIDFVARAPVGREVEELTGKEIAKALSNMMPLTQYLKKIQEAEQAIAKNVIAKEEKPIQLEATQQLVQITLPQNVLEEIKKLPGTLEGVLYDNNWNLIEKVQVRDIIPKLEAYEDNKVAYIVFDGVITQRLLDLASQKNIKMIIGARIGGINKRPQNVDILTFTDIISS</sequence>
<protein>
    <recommendedName>
        <fullName evidence="1">DNA primase DnaG</fullName>
        <ecNumber evidence="1">2.7.7.101</ecNumber>
    </recommendedName>
</protein>
<dbReference type="EC" id="2.7.7.101" evidence="1"/>
<dbReference type="EMBL" id="CP001402">
    <property type="protein sequence ID" value="ACR42650.1"/>
    <property type="molecule type" value="Genomic_DNA"/>
</dbReference>
<dbReference type="RefSeq" id="WP_012712008.1">
    <property type="nucleotide sequence ID" value="NC_012726.1"/>
</dbReference>
<dbReference type="SMR" id="C4KJ86"/>
<dbReference type="GeneID" id="84059392"/>
<dbReference type="KEGG" id="sid:M164_2048"/>
<dbReference type="HOGENOM" id="CLU_034626_0_0_2"/>
<dbReference type="Proteomes" id="UP000001479">
    <property type="component" value="Chromosome"/>
</dbReference>
<dbReference type="GO" id="GO:0005737">
    <property type="term" value="C:cytoplasm"/>
    <property type="evidence" value="ECO:0007669"/>
    <property type="project" value="TreeGrafter"/>
</dbReference>
<dbReference type="GO" id="GO:0000428">
    <property type="term" value="C:DNA-directed RNA polymerase complex"/>
    <property type="evidence" value="ECO:0007669"/>
    <property type="project" value="UniProtKB-KW"/>
</dbReference>
<dbReference type="GO" id="GO:0000178">
    <property type="term" value="C:exosome (RNase complex)"/>
    <property type="evidence" value="ECO:0007669"/>
    <property type="project" value="UniProtKB-KW"/>
</dbReference>
<dbReference type="GO" id="GO:1990077">
    <property type="term" value="C:primosome complex"/>
    <property type="evidence" value="ECO:0007669"/>
    <property type="project" value="UniProtKB-KW"/>
</dbReference>
<dbReference type="GO" id="GO:0003899">
    <property type="term" value="F:DNA-directed RNA polymerase activity"/>
    <property type="evidence" value="ECO:0007669"/>
    <property type="project" value="InterPro"/>
</dbReference>
<dbReference type="GO" id="GO:0046872">
    <property type="term" value="F:metal ion binding"/>
    <property type="evidence" value="ECO:0007669"/>
    <property type="project" value="UniProtKB-KW"/>
</dbReference>
<dbReference type="GO" id="GO:0008143">
    <property type="term" value="F:poly(A) binding"/>
    <property type="evidence" value="ECO:0007669"/>
    <property type="project" value="InterPro"/>
</dbReference>
<dbReference type="GO" id="GO:0006269">
    <property type="term" value="P:DNA replication, synthesis of primer"/>
    <property type="evidence" value="ECO:0007669"/>
    <property type="project" value="UniProtKB-UniRule"/>
</dbReference>
<dbReference type="CDD" id="cd01029">
    <property type="entry name" value="TOPRIM_primases"/>
    <property type="match status" value="1"/>
</dbReference>
<dbReference type="FunFam" id="3.40.1360.10:FF:000010">
    <property type="entry name" value="DNA primase DnaG"/>
    <property type="match status" value="1"/>
</dbReference>
<dbReference type="Gene3D" id="3.40.1360.10">
    <property type="match status" value="1"/>
</dbReference>
<dbReference type="HAMAP" id="MF_00007">
    <property type="entry name" value="DNA_primase_DnaG_arc"/>
    <property type="match status" value="1"/>
</dbReference>
<dbReference type="InterPro" id="IPR050219">
    <property type="entry name" value="DnaG_primase"/>
</dbReference>
<dbReference type="InterPro" id="IPR020607">
    <property type="entry name" value="Primase_DnaG_arc"/>
</dbReference>
<dbReference type="InterPro" id="IPR034154">
    <property type="entry name" value="TOPRIM_DnaG/twinkle"/>
</dbReference>
<dbReference type="InterPro" id="IPR006171">
    <property type="entry name" value="TOPRIM_dom"/>
</dbReference>
<dbReference type="NCBIfam" id="NF003108">
    <property type="entry name" value="PRK04031.1-1"/>
    <property type="match status" value="1"/>
</dbReference>
<dbReference type="PANTHER" id="PTHR30313">
    <property type="entry name" value="DNA PRIMASE"/>
    <property type="match status" value="1"/>
</dbReference>
<dbReference type="PANTHER" id="PTHR30313:SF2">
    <property type="entry name" value="DNA PRIMASE"/>
    <property type="match status" value="1"/>
</dbReference>
<dbReference type="Pfam" id="PF13662">
    <property type="entry name" value="Toprim_4"/>
    <property type="match status" value="1"/>
</dbReference>
<dbReference type="SMART" id="SM00493">
    <property type="entry name" value="TOPRIM"/>
    <property type="match status" value="1"/>
</dbReference>
<dbReference type="SUPFAM" id="SSF56731">
    <property type="entry name" value="DNA primase core"/>
    <property type="match status" value="1"/>
</dbReference>
<dbReference type="PROSITE" id="PS50880">
    <property type="entry name" value="TOPRIM"/>
    <property type="match status" value="1"/>
</dbReference>
<gene>
    <name evidence="1" type="primary">dnaG</name>
    <name type="ordered locus">M164_2048</name>
</gene>
<comment type="function">
    <text evidence="1">RNA polymerase that catalyzes the synthesis of short RNA molecules used as primers for DNA polymerase during DNA replication. Also part of the exosome, which is a complex involved in RNA degradation. Acts as a poly(A)-binding protein that enhances the interaction between heteromeric, adenine-rich transcripts and the exosome.</text>
</comment>
<comment type="catalytic activity">
    <reaction evidence="1">
        <text>ssDNA + n NTP = ssDNA/pppN(pN)n-1 hybrid + (n-1) diphosphate.</text>
        <dbReference type="EC" id="2.7.7.101"/>
    </reaction>
</comment>
<comment type="cofactor">
    <cofactor evidence="1">
        <name>Mg(2+)</name>
        <dbReference type="ChEBI" id="CHEBI:18420"/>
    </cofactor>
    <text evidence="1">Binds two Mg(2+) per subunit.</text>
</comment>
<comment type="subunit">
    <text evidence="1">Forms a ternary complex with MCM helicase and DNA. Component of the archaeal exosome complex.</text>
</comment>
<comment type="similarity">
    <text evidence="1">Belongs to the archaeal DnaG primase family.</text>
</comment>
<accession>C4KJ86</accession>
<feature type="chain" id="PRO_1000201709" description="DNA primase DnaG">
    <location>
        <begin position="1"/>
        <end position="402"/>
    </location>
</feature>
<feature type="domain" description="Toprim" evidence="1">
    <location>
        <begin position="165"/>
        <end position="243"/>
    </location>
</feature>
<feature type="binding site" evidence="1">
    <location>
        <position position="171"/>
    </location>
    <ligand>
        <name>Mg(2+)</name>
        <dbReference type="ChEBI" id="CHEBI:18420"/>
        <label>1</label>
        <note>catalytic</note>
    </ligand>
</feature>
<feature type="binding site" evidence="1">
    <location>
        <position position="216"/>
    </location>
    <ligand>
        <name>Mg(2+)</name>
        <dbReference type="ChEBI" id="CHEBI:18420"/>
        <label>1</label>
        <note>catalytic</note>
    </ligand>
</feature>
<feature type="binding site" evidence="1">
    <location>
        <position position="216"/>
    </location>
    <ligand>
        <name>Mg(2+)</name>
        <dbReference type="ChEBI" id="CHEBI:18420"/>
        <label>2</label>
    </ligand>
</feature>
<feature type="binding site" evidence="1">
    <location>
        <position position="218"/>
    </location>
    <ligand>
        <name>Mg(2+)</name>
        <dbReference type="ChEBI" id="CHEBI:18420"/>
        <label>2</label>
    </ligand>
</feature>
<proteinExistence type="inferred from homology"/>
<name>DNAG_SACI6</name>
<reference key="1">
    <citation type="journal article" date="2009" name="Proc. Natl. Acad. Sci. U.S.A.">
        <title>Biogeography of the Sulfolobus islandicus pan-genome.</title>
        <authorList>
            <person name="Reno M.L."/>
            <person name="Held N.L."/>
            <person name="Fields C.J."/>
            <person name="Burke P.V."/>
            <person name="Whitaker R.J."/>
        </authorList>
    </citation>
    <scope>NUCLEOTIDE SEQUENCE [LARGE SCALE GENOMIC DNA]</scope>
    <source>
        <strain>M.16.4 / Kamchatka #3</strain>
    </source>
</reference>
<keyword id="KW-0235">DNA replication</keyword>
<keyword id="KW-0240">DNA-directed RNA polymerase</keyword>
<keyword id="KW-0271">Exosome</keyword>
<keyword id="KW-0460">Magnesium</keyword>
<keyword id="KW-0479">Metal-binding</keyword>
<keyword id="KW-0548">Nucleotidyltransferase</keyword>
<keyword id="KW-0639">Primosome</keyword>
<keyword id="KW-0804">Transcription</keyword>
<keyword id="KW-0808">Transferase</keyword>